<sequence>MNPTLPTDSPLLSRSMIAVICAQFLSAFGDNALLFATLALIKQQLYPDWSQPILQMAFVATYIILAPFVGQVADSFAKGRVMMVANGLKLAGALVICFGFNPFLGYTLVGVGAAAYSPAKYGILGEITSGEKLVKANGLMEASTIAAILIGSVAGGILADWHIVAALAVCAVVYAAAVIANLYIPRLPAAHPAVSWTPRAMTQAFFNACVVLWRDGQTRFSLIGTSLFWGAGVTLRFLLVLWVPVALGIADNATPTLLNAMVAVGIVIGAGAAARFVTLETVRRCMPAGILIGVAVAIFALQTTLFNAYALLLIIGVLGGFFVVPLNALLQERGKNSVGAGNAIAVQNLGENTAMLLMLGLYSLAVKVSVPVVGVGIGFGVVFALAISALWLSQRRAK</sequence>
<comment type="function">
    <text evidence="1">Catalyzes the facilitated diffusion of 2-acyl-glycero-3-phosphoethanolamine (2-acyl-GPE) into the cell.</text>
</comment>
<comment type="subcellular location">
    <subcellularLocation>
        <location evidence="1">Cell inner membrane</location>
        <topology evidence="1">Multi-pass membrane protein</topology>
    </subcellularLocation>
</comment>
<comment type="similarity">
    <text evidence="1">Belongs to the major facilitator superfamily. LplT (TC 2.A.1.42) family.</text>
</comment>
<proteinExistence type="inferred from homology"/>
<dbReference type="EMBL" id="CP000826">
    <property type="protein sequence ID" value="ABV42925.1"/>
    <property type="molecule type" value="Genomic_DNA"/>
</dbReference>
<dbReference type="SMR" id="A8GII5"/>
<dbReference type="STRING" id="399741.Spro_3829"/>
<dbReference type="KEGG" id="spe:Spro_3829"/>
<dbReference type="eggNOG" id="COG0477">
    <property type="taxonomic scope" value="Bacteria"/>
</dbReference>
<dbReference type="HOGENOM" id="CLU_047399_0_0_6"/>
<dbReference type="OrthoDB" id="9803968at2"/>
<dbReference type="GO" id="GO:0005886">
    <property type="term" value="C:plasma membrane"/>
    <property type="evidence" value="ECO:0007669"/>
    <property type="project" value="UniProtKB-SubCell"/>
</dbReference>
<dbReference type="GO" id="GO:0051978">
    <property type="term" value="F:lysophospholipid:sodium symporter activity"/>
    <property type="evidence" value="ECO:0007669"/>
    <property type="project" value="InterPro"/>
</dbReference>
<dbReference type="CDD" id="cd06173">
    <property type="entry name" value="MFS_MefA_like"/>
    <property type="match status" value="1"/>
</dbReference>
<dbReference type="Gene3D" id="1.20.1250.20">
    <property type="entry name" value="MFS general substrate transporter like domains"/>
    <property type="match status" value="1"/>
</dbReference>
<dbReference type="HAMAP" id="MF_01585">
    <property type="entry name" value="MFS_LplT"/>
    <property type="match status" value="1"/>
</dbReference>
<dbReference type="InterPro" id="IPR023727">
    <property type="entry name" value="LysoPLipid__transptr_LplT"/>
</dbReference>
<dbReference type="InterPro" id="IPR011701">
    <property type="entry name" value="MFS"/>
</dbReference>
<dbReference type="InterPro" id="IPR036259">
    <property type="entry name" value="MFS_trans_sf"/>
</dbReference>
<dbReference type="NCBIfam" id="NF008397">
    <property type="entry name" value="PRK11195.1"/>
    <property type="match status" value="1"/>
</dbReference>
<dbReference type="PANTHER" id="PTHR43266">
    <property type="entry name" value="MACROLIDE-EFFLUX PROTEIN"/>
    <property type="match status" value="1"/>
</dbReference>
<dbReference type="PANTHER" id="PTHR43266:SF2">
    <property type="entry name" value="MAJOR FACILITATOR SUPERFAMILY (MFS) PROFILE DOMAIN-CONTAINING PROTEIN"/>
    <property type="match status" value="1"/>
</dbReference>
<dbReference type="Pfam" id="PF07690">
    <property type="entry name" value="MFS_1"/>
    <property type="match status" value="1"/>
</dbReference>
<dbReference type="SUPFAM" id="SSF103473">
    <property type="entry name" value="MFS general substrate transporter"/>
    <property type="match status" value="1"/>
</dbReference>
<feature type="chain" id="PRO_1000069313" description="Lysophospholipid transporter LplT">
    <location>
        <begin position="1"/>
        <end position="398"/>
    </location>
</feature>
<feature type="transmembrane region" description="Helical" evidence="1">
    <location>
        <begin position="16"/>
        <end position="36"/>
    </location>
</feature>
<feature type="transmembrane region" description="Helical" evidence="1">
    <location>
        <begin position="53"/>
        <end position="73"/>
    </location>
</feature>
<feature type="transmembrane region" description="Helical" evidence="1">
    <location>
        <begin position="91"/>
        <end position="111"/>
    </location>
</feature>
<feature type="transmembrane region" description="Helical" evidence="1">
    <location>
        <begin position="139"/>
        <end position="159"/>
    </location>
</feature>
<feature type="transmembrane region" description="Helical" evidence="1">
    <location>
        <begin position="163"/>
        <end position="183"/>
    </location>
</feature>
<feature type="transmembrane region" description="Helical" evidence="1">
    <location>
        <begin position="195"/>
        <end position="213"/>
    </location>
</feature>
<feature type="transmembrane region" description="Helical" evidence="1">
    <location>
        <begin position="227"/>
        <end position="247"/>
    </location>
</feature>
<feature type="transmembrane region" description="Helical" evidence="1">
    <location>
        <begin position="253"/>
        <end position="273"/>
    </location>
</feature>
<feature type="transmembrane region" description="Helical" evidence="1">
    <location>
        <begin position="286"/>
        <end position="306"/>
    </location>
</feature>
<feature type="transmembrane region" description="Helical" evidence="1">
    <location>
        <begin position="310"/>
        <end position="330"/>
    </location>
</feature>
<feature type="transmembrane region" description="Helical" evidence="1">
    <location>
        <begin position="344"/>
        <end position="364"/>
    </location>
</feature>
<feature type="transmembrane region" description="Helical" evidence="1">
    <location>
        <begin position="372"/>
        <end position="392"/>
    </location>
</feature>
<reference key="1">
    <citation type="submission" date="2007-09" db="EMBL/GenBank/DDBJ databases">
        <title>Complete sequence of chromosome of Serratia proteamaculans 568.</title>
        <authorList>
            <consortium name="US DOE Joint Genome Institute"/>
            <person name="Copeland A."/>
            <person name="Lucas S."/>
            <person name="Lapidus A."/>
            <person name="Barry K."/>
            <person name="Glavina del Rio T."/>
            <person name="Dalin E."/>
            <person name="Tice H."/>
            <person name="Pitluck S."/>
            <person name="Chain P."/>
            <person name="Malfatti S."/>
            <person name="Shin M."/>
            <person name="Vergez L."/>
            <person name="Schmutz J."/>
            <person name="Larimer F."/>
            <person name="Land M."/>
            <person name="Hauser L."/>
            <person name="Kyrpides N."/>
            <person name="Kim E."/>
            <person name="Taghavi S."/>
            <person name="Newman L."/>
            <person name="Vangronsveld J."/>
            <person name="van der Lelie D."/>
            <person name="Richardson P."/>
        </authorList>
    </citation>
    <scope>NUCLEOTIDE SEQUENCE [LARGE SCALE GENOMIC DNA]</scope>
    <source>
        <strain>568</strain>
    </source>
</reference>
<name>LPLT_SERP5</name>
<organism>
    <name type="scientific">Serratia proteamaculans (strain 568)</name>
    <dbReference type="NCBI Taxonomy" id="399741"/>
    <lineage>
        <taxon>Bacteria</taxon>
        <taxon>Pseudomonadati</taxon>
        <taxon>Pseudomonadota</taxon>
        <taxon>Gammaproteobacteria</taxon>
        <taxon>Enterobacterales</taxon>
        <taxon>Yersiniaceae</taxon>
        <taxon>Serratia</taxon>
    </lineage>
</organism>
<accession>A8GII5</accession>
<evidence type="ECO:0000255" key="1">
    <source>
        <dbReference type="HAMAP-Rule" id="MF_01585"/>
    </source>
</evidence>
<gene>
    <name evidence="1" type="primary">lplT</name>
    <name type="ordered locus">Spro_3829</name>
</gene>
<protein>
    <recommendedName>
        <fullName evidence="1">Lysophospholipid transporter LplT</fullName>
    </recommendedName>
</protein>
<keyword id="KW-0997">Cell inner membrane</keyword>
<keyword id="KW-1003">Cell membrane</keyword>
<keyword id="KW-0445">Lipid transport</keyword>
<keyword id="KW-0472">Membrane</keyword>
<keyword id="KW-0812">Transmembrane</keyword>
<keyword id="KW-1133">Transmembrane helix</keyword>
<keyword id="KW-0813">Transport</keyword>